<dbReference type="EC" id="7.4.2.6" evidence="3"/>
<dbReference type="EMBL" id="AL123456">
    <property type="protein sequence ID" value="CCP44037.1"/>
    <property type="molecule type" value="Genomic_DNA"/>
</dbReference>
<dbReference type="PIR" id="A70756">
    <property type="entry name" value="A70756"/>
</dbReference>
<dbReference type="RefSeq" id="NP_215797.1">
    <property type="nucleotide sequence ID" value="NC_000962.3"/>
</dbReference>
<dbReference type="RefSeq" id="WP_003406602.1">
    <property type="nucleotide sequence ID" value="NZ_NVQJ01000030.1"/>
</dbReference>
<dbReference type="PDB" id="8J5Q">
    <property type="method" value="EM"/>
    <property type="resolution" value="3.25 A"/>
    <property type="chains" value="D=1-612"/>
</dbReference>
<dbReference type="PDB" id="8J5R">
    <property type="method" value="EM"/>
    <property type="resolution" value="3.28 A"/>
    <property type="chains" value="D=1-612"/>
</dbReference>
<dbReference type="PDB" id="8J5S">
    <property type="method" value="EM"/>
    <property type="resolution" value="3.00 A"/>
    <property type="chains" value="D=1-612"/>
</dbReference>
<dbReference type="PDB" id="8J5T">
    <property type="method" value="EM"/>
    <property type="resolution" value="2.98 A"/>
    <property type="chains" value="D=1-612"/>
</dbReference>
<dbReference type="PDBsum" id="8J5Q"/>
<dbReference type="PDBsum" id="8J5R"/>
<dbReference type="PDBsum" id="8J5S"/>
<dbReference type="PDBsum" id="8J5T"/>
<dbReference type="EMDB" id="EMD-35990"/>
<dbReference type="EMDB" id="EMD-35991"/>
<dbReference type="EMDB" id="EMD-35992"/>
<dbReference type="EMDB" id="EMD-35993"/>
<dbReference type="SMR" id="P9WQJ5"/>
<dbReference type="FunCoup" id="P9WQJ5">
    <property type="interactions" value="98"/>
</dbReference>
<dbReference type="STRING" id="83332.Rv1281c"/>
<dbReference type="PaxDb" id="83332-Rv1281c"/>
<dbReference type="DNASU" id="886997"/>
<dbReference type="GeneID" id="886997"/>
<dbReference type="KEGG" id="mtu:Rv1281c"/>
<dbReference type="KEGG" id="mtv:RVBD_1281c"/>
<dbReference type="TubercuList" id="Rv1281c"/>
<dbReference type="eggNOG" id="COG4172">
    <property type="taxonomic scope" value="Bacteria"/>
</dbReference>
<dbReference type="InParanoid" id="P9WQJ5"/>
<dbReference type="OrthoDB" id="8036461at2"/>
<dbReference type="PhylomeDB" id="P9WQJ5"/>
<dbReference type="Reactome" id="R-HSA-1222538">
    <property type="pathway name" value="Tolerance by Mtb to nitric oxide produced by macrophages"/>
</dbReference>
<dbReference type="Proteomes" id="UP000001584">
    <property type="component" value="Chromosome"/>
</dbReference>
<dbReference type="GO" id="GO:0009274">
    <property type="term" value="C:peptidoglycan-based cell wall"/>
    <property type="evidence" value="ECO:0007005"/>
    <property type="project" value="MTBBASE"/>
</dbReference>
<dbReference type="GO" id="GO:0005886">
    <property type="term" value="C:plasma membrane"/>
    <property type="evidence" value="ECO:0007005"/>
    <property type="project" value="MTBBASE"/>
</dbReference>
<dbReference type="GO" id="GO:0005524">
    <property type="term" value="F:ATP binding"/>
    <property type="evidence" value="ECO:0007669"/>
    <property type="project" value="UniProtKB-KW"/>
</dbReference>
<dbReference type="GO" id="GO:0016887">
    <property type="term" value="F:ATP hydrolysis activity"/>
    <property type="evidence" value="ECO:0007669"/>
    <property type="project" value="InterPro"/>
</dbReference>
<dbReference type="GO" id="GO:0022857">
    <property type="term" value="F:transmembrane transporter activity"/>
    <property type="evidence" value="ECO:0000318"/>
    <property type="project" value="GO_Central"/>
</dbReference>
<dbReference type="GO" id="GO:0015833">
    <property type="term" value="P:peptide transport"/>
    <property type="evidence" value="ECO:0007669"/>
    <property type="project" value="InterPro"/>
</dbReference>
<dbReference type="GO" id="GO:0055085">
    <property type="term" value="P:transmembrane transport"/>
    <property type="evidence" value="ECO:0000318"/>
    <property type="project" value="GO_Central"/>
</dbReference>
<dbReference type="CDD" id="cd03257">
    <property type="entry name" value="ABC_NikE_OppD_transporters"/>
    <property type="match status" value="2"/>
</dbReference>
<dbReference type="FunFam" id="3.40.50.300:FF:001383">
    <property type="entry name" value="Peptide ABC transporter ATP-binding protein"/>
    <property type="match status" value="1"/>
</dbReference>
<dbReference type="FunFam" id="3.40.50.300:FF:001659">
    <property type="entry name" value="Peptide ABC transporter ATP-binding protein"/>
    <property type="match status" value="1"/>
</dbReference>
<dbReference type="Gene3D" id="3.40.50.300">
    <property type="entry name" value="P-loop containing nucleotide triphosphate hydrolases"/>
    <property type="match status" value="2"/>
</dbReference>
<dbReference type="InterPro" id="IPR003593">
    <property type="entry name" value="AAA+_ATPase"/>
</dbReference>
<dbReference type="InterPro" id="IPR050388">
    <property type="entry name" value="ABC_Ni/Peptide_Import"/>
</dbReference>
<dbReference type="InterPro" id="IPR003439">
    <property type="entry name" value="ABC_transporter-like_ATP-bd"/>
</dbReference>
<dbReference type="InterPro" id="IPR017871">
    <property type="entry name" value="ABC_transporter-like_CS"/>
</dbReference>
<dbReference type="InterPro" id="IPR013563">
    <property type="entry name" value="Oligopep_ABC_C"/>
</dbReference>
<dbReference type="InterPro" id="IPR027417">
    <property type="entry name" value="P-loop_NTPase"/>
</dbReference>
<dbReference type="NCBIfam" id="TIGR01727">
    <property type="entry name" value="oligo_HPY"/>
    <property type="match status" value="1"/>
</dbReference>
<dbReference type="NCBIfam" id="NF007739">
    <property type="entry name" value="PRK10419.1"/>
    <property type="match status" value="2"/>
</dbReference>
<dbReference type="NCBIfam" id="NF008453">
    <property type="entry name" value="PRK11308.1"/>
    <property type="match status" value="2"/>
</dbReference>
<dbReference type="PANTHER" id="PTHR43297:SF2">
    <property type="entry name" value="DIPEPTIDE TRANSPORT ATP-BINDING PROTEIN DPPD"/>
    <property type="match status" value="1"/>
</dbReference>
<dbReference type="PANTHER" id="PTHR43297">
    <property type="entry name" value="OLIGOPEPTIDE TRANSPORT ATP-BINDING PROTEIN APPD"/>
    <property type="match status" value="1"/>
</dbReference>
<dbReference type="Pfam" id="PF00005">
    <property type="entry name" value="ABC_tran"/>
    <property type="match status" value="2"/>
</dbReference>
<dbReference type="Pfam" id="PF08352">
    <property type="entry name" value="oligo_HPY"/>
    <property type="match status" value="2"/>
</dbReference>
<dbReference type="SMART" id="SM00382">
    <property type="entry name" value="AAA"/>
    <property type="match status" value="2"/>
</dbReference>
<dbReference type="SUPFAM" id="SSF52540">
    <property type="entry name" value="P-loop containing nucleoside triphosphate hydrolases"/>
    <property type="match status" value="2"/>
</dbReference>
<dbReference type="PROSITE" id="PS00211">
    <property type="entry name" value="ABC_TRANSPORTER_1"/>
    <property type="match status" value="2"/>
</dbReference>
<dbReference type="PROSITE" id="PS50893">
    <property type="entry name" value="ABC_TRANSPORTER_2"/>
    <property type="match status" value="2"/>
</dbReference>
<name>OPPD_MYCTU</name>
<gene>
    <name evidence="4" type="primary">oppD</name>
    <name evidence="7" type="ordered locus">Rv1281c</name>
    <name type="ORF">MTCY50.01</name>
</gene>
<sequence>MSPLLEVTDLAVTFRTDGDPVTAVRGISYRVEPGEVVAMVGESGSGKSAAAMAVVGLLPEYAQVRGSVRLQGTELLGLADNAMSRFRGKAIGTVFQDPMSALTPVYTVGDQIAEAIEVHQPRVGKKAARRRAVELLDLVGISQPQRRSRAFPHELSGGERQRVVIAIAIANDPDLLICDEPTTALDVTVQAQILDVLKAARDVTGAGVLIITHDLGVVAEFADRALVMYAGRVVESAGVNDLYRDRRMPYTVGLLGSVPRLDAAQGTRLVPIPGAPPSLAGLAPGCPFAPRCPLVIDECLTAEPELLDVATDHRAACIRTELVTGRSAADIYRVKTEARPAALGDASVVVRVRHLVKTYRLAKGVVLRRAIGEVRAVDGISLELRQGRTLGIVGESGSGKSTTLHEILELAAPQSGSIEVLGTDVATLGTAERRSLRRDIQVVFQDPVASLDPRLPVFDLIAEPLQANGFGKNETHARVAELLDIVGLRHGDASRYPAEFSGGQKQRIGIARALALQPKILALDEPVSALDVSIQAGIINLLLDLQEQFGLSYLFVSHDLSVVKHLAHQVAVMLAGTVVEQGDSEEVFGNPKHEYTRRLLGAVPQPDPARRG</sequence>
<reference key="1">
    <citation type="journal article" date="1998" name="Nature">
        <title>Deciphering the biology of Mycobacterium tuberculosis from the complete genome sequence.</title>
        <authorList>
            <person name="Cole S.T."/>
            <person name="Brosch R."/>
            <person name="Parkhill J."/>
            <person name="Garnier T."/>
            <person name="Churcher C.M."/>
            <person name="Harris D.E."/>
            <person name="Gordon S.V."/>
            <person name="Eiglmeier K."/>
            <person name="Gas S."/>
            <person name="Barry C.E. III"/>
            <person name="Tekaia F."/>
            <person name="Badcock K."/>
            <person name="Basham D."/>
            <person name="Brown D."/>
            <person name="Chillingworth T."/>
            <person name="Connor R."/>
            <person name="Davies R.M."/>
            <person name="Devlin K."/>
            <person name="Feltwell T."/>
            <person name="Gentles S."/>
            <person name="Hamlin N."/>
            <person name="Holroyd S."/>
            <person name="Hornsby T."/>
            <person name="Jagels K."/>
            <person name="Krogh A."/>
            <person name="McLean J."/>
            <person name="Moule S."/>
            <person name="Murphy L.D."/>
            <person name="Oliver S."/>
            <person name="Osborne J."/>
            <person name="Quail M.A."/>
            <person name="Rajandream M.A."/>
            <person name="Rogers J."/>
            <person name="Rutter S."/>
            <person name="Seeger K."/>
            <person name="Skelton S."/>
            <person name="Squares S."/>
            <person name="Squares R."/>
            <person name="Sulston J.E."/>
            <person name="Taylor K."/>
            <person name="Whitehead S."/>
            <person name="Barrell B.G."/>
        </authorList>
    </citation>
    <scope>NUCLEOTIDE SEQUENCE [LARGE SCALE GENOMIC DNA]</scope>
    <source>
        <strain>ATCC 25618 / H37Rv</strain>
    </source>
</reference>
<reference key="2">
    <citation type="journal article" date="2010" name="PLoS ONE">
        <title>An oligopeptide transporter of Mycobacterium tuberculosis regulates cytokine release and apoptosis of infected macrophages.</title>
        <authorList>
            <person name="Dasgupta A."/>
            <person name="Sureka K."/>
            <person name="Mitra D."/>
            <person name="Saha B."/>
            <person name="Sanyal S."/>
            <person name="Das A.K."/>
            <person name="Chakrabarti P."/>
            <person name="Jackson M."/>
            <person name="Gicquel B."/>
            <person name="Kundu M."/>
            <person name="Basu J."/>
        </authorList>
    </citation>
    <scope>FUNCTION</scope>
    <scope>DISRUPTION PHENOTYPE</scope>
    <source>
        <strain>H37Rv</strain>
    </source>
</reference>
<reference key="3">
    <citation type="journal article" date="2011" name="Mol. Cell. Proteomics">
        <title>Proteogenomic analysis of Mycobacterium tuberculosis by high resolution mass spectrometry.</title>
        <authorList>
            <person name="Kelkar D.S."/>
            <person name="Kumar D."/>
            <person name="Kumar P."/>
            <person name="Balakrishnan L."/>
            <person name="Muthusamy B."/>
            <person name="Yadav A.K."/>
            <person name="Shrivastava P."/>
            <person name="Marimuthu A."/>
            <person name="Anand S."/>
            <person name="Sundaram H."/>
            <person name="Kingsbury R."/>
            <person name="Harsha H.C."/>
            <person name="Nair B."/>
            <person name="Prasad T.S."/>
            <person name="Chauhan D.S."/>
            <person name="Katoch K."/>
            <person name="Katoch V.M."/>
            <person name="Kumar P."/>
            <person name="Chaerkady R."/>
            <person name="Ramachandran S."/>
            <person name="Dash D."/>
            <person name="Pandey A."/>
        </authorList>
    </citation>
    <scope>IDENTIFICATION BY MASS SPECTROMETRY [LARGE SCALE ANALYSIS]</scope>
    <source>
        <strain>ATCC 25618 / H37Rv</strain>
    </source>
</reference>
<reference evidence="8 9 10 11" key="4">
    <citation type="journal article" date="2024" name="Nat. Struct. Mol. Biol.">
        <title>An oligopeptide permease, OppABCD, requires an iron-sulfur cluster domain for functionality.</title>
        <authorList>
            <person name="Yang X."/>
            <person name="Hu T."/>
            <person name="Liang J."/>
            <person name="Xiong Z."/>
            <person name="Lin Z."/>
            <person name="Zhao Y."/>
            <person name="Zhou X."/>
            <person name="Gao Y."/>
            <person name="Sun S."/>
            <person name="Yang X."/>
            <person name="Guddat L.W."/>
            <person name="Yang H."/>
            <person name="Rao Z."/>
            <person name="Zhang B."/>
        </authorList>
    </citation>
    <scope>STRUCTURE BY ELECTRON MICROSCOPY (2.98 ANGSTROMS) IN COMPLEXES WITH OPPA; OPPB; OPPC; ATP AND IRON-SULFUR (4FE-4S) CLUSTER</scope>
    <scope>FUNCTION</scope>
    <scope>CATALYTIC ACTIVITY</scope>
    <scope>ACTIVITY REGULATION</scope>
    <scope>BIOPHYSICOCHEMICAL PROPERTIES</scope>
    <scope>SUBUNIT</scope>
    <scope>SUBCELLULAR LOCATION</scope>
    <scope>DOMAIN</scope>
    <scope>MUTAGENESIS OF CYS-286; CYS-292; CYS-299 AND CYS-317</scope>
    <source>
        <strain>H37Rv</strain>
    </source>
</reference>
<keyword id="KW-0002">3D-structure</keyword>
<keyword id="KW-0004">4Fe-4S</keyword>
<keyword id="KW-0067">ATP-binding</keyword>
<keyword id="KW-0997">Cell inner membrane</keyword>
<keyword id="KW-1003">Cell membrane</keyword>
<keyword id="KW-0408">Iron</keyword>
<keyword id="KW-0411">Iron-sulfur</keyword>
<keyword id="KW-0472">Membrane</keyword>
<keyword id="KW-0479">Metal-binding</keyword>
<keyword id="KW-0547">Nucleotide-binding</keyword>
<keyword id="KW-0571">Peptide transport</keyword>
<keyword id="KW-0653">Protein transport</keyword>
<keyword id="KW-1185">Reference proteome</keyword>
<keyword id="KW-0677">Repeat</keyword>
<keyword id="KW-1278">Translocase</keyword>
<keyword id="KW-0813">Transport</keyword>
<organism>
    <name type="scientific">Mycobacterium tuberculosis (strain ATCC 25618 / H37Rv)</name>
    <dbReference type="NCBI Taxonomy" id="83332"/>
    <lineage>
        <taxon>Bacteria</taxon>
        <taxon>Bacillati</taxon>
        <taxon>Actinomycetota</taxon>
        <taxon>Actinomycetes</taxon>
        <taxon>Mycobacteriales</taxon>
        <taxon>Mycobacteriaceae</taxon>
        <taxon>Mycobacterium</taxon>
        <taxon>Mycobacterium tuberculosis complex</taxon>
    </lineage>
</organism>
<evidence type="ECO:0000255" key="1">
    <source>
        <dbReference type="PROSITE-ProRule" id="PRU00434"/>
    </source>
</evidence>
<evidence type="ECO:0000269" key="2">
    <source>
    </source>
</evidence>
<evidence type="ECO:0000269" key="3">
    <source>
    </source>
</evidence>
<evidence type="ECO:0000303" key="4">
    <source>
    </source>
</evidence>
<evidence type="ECO:0000305" key="5"/>
<evidence type="ECO:0000305" key="6">
    <source>
    </source>
</evidence>
<evidence type="ECO:0000312" key="7">
    <source>
        <dbReference type="EMBL" id="CCP44037.1"/>
    </source>
</evidence>
<evidence type="ECO:0007744" key="8">
    <source>
        <dbReference type="PDB" id="8J5Q"/>
    </source>
</evidence>
<evidence type="ECO:0007744" key="9">
    <source>
        <dbReference type="PDB" id="8J5R"/>
    </source>
</evidence>
<evidence type="ECO:0007744" key="10">
    <source>
        <dbReference type="PDB" id="8J5S"/>
    </source>
</evidence>
<evidence type="ECO:0007744" key="11">
    <source>
        <dbReference type="PDB" id="8J5T"/>
    </source>
</evidence>
<evidence type="ECO:0007829" key="12">
    <source>
        <dbReference type="PDB" id="8J5Q"/>
    </source>
</evidence>
<evidence type="ECO:0007829" key="13">
    <source>
        <dbReference type="PDB" id="8J5R"/>
    </source>
</evidence>
<evidence type="ECO:0007829" key="14">
    <source>
        <dbReference type="PDB" id="8J5S"/>
    </source>
</evidence>
<evidence type="ECO:0007829" key="15">
    <source>
        <dbReference type="PDB" id="8J5T"/>
    </source>
</evidence>
<feature type="chain" id="PRO_0000093259" description="Oligopeptide transport ATP-binding protein OppD">
    <location>
        <begin position="1"/>
        <end position="612"/>
    </location>
</feature>
<feature type="domain" description="ABC transporter 1" evidence="1">
    <location>
        <begin position="5"/>
        <end position="255"/>
    </location>
</feature>
<feature type="domain" description="ABC transporter 2" evidence="1">
    <location>
        <begin position="350"/>
        <end position="600"/>
    </location>
</feature>
<feature type="binding site" evidence="3 11">
    <location>
        <position position="43"/>
    </location>
    <ligand>
        <name>ATP</name>
        <dbReference type="ChEBI" id="CHEBI:30616"/>
        <label>1</label>
    </ligand>
</feature>
<feature type="binding site" evidence="3 11">
    <location>
        <position position="44"/>
    </location>
    <ligand>
        <name>ATP</name>
        <dbReference type="ChEBI" id="CHEBI:30616"/>
        <label>1</label>
    </ligand>
</feature>
<feature type="binding site" evidence="3 11">
    <location>
        <position position="45"/>
    </location>
    <ligand>
        <name>ATP</name>
        <dbReference type="ChEBI" id="CHEBI:30616"/>
        <label>1</label>
    </ligand>
</feature>
<feature type="binding site" evidence="3 11">
    <location>
        <position position="46"/>
    </location>
    <ligand>
        <name>ATP</name>
        <dbReference type="ChEBI" id="CHEBI:30616"/>
        <label>1</label>
    </ligand>
</feature>
<feature type="binding site" evidence="3 11">
    <location>
        <position position="47"/>
    </location>
    <ligand>
        <name>ATP</name>
        <dbReference type="ChEBI" id="CHEBI:30616"/>
        <label>1</label>
    </ligand>
</feature>
<feature type="binding site" evidence="3 11">
    <location>
        <position position="48"/>
    </location>
    <ligand>
        <name>ATP</name>
        <dbReference type="ChEBI" id="CHEBI:30616"/>
        <label>1</label>
    </ligand>
</feature>
<feature type="binding site" evidence="3 11">
    <location>
        <position position="49"/>
    </location>
    <ligand>
        <name>ATP</name>
        <dbReference type="ChEBI" id="CHEBI:30616"/>
        <label>1</label>
    </ligand>
</feature>
<feature type="binding site" evidence="3 11">
    <location>
        <position position="61"/>
    </location>
    <ligand>
        <name>ATP</name>
        <dbReference type="ChEBI" id="CHEBI:30616"/>
        <label>1</label>
    </ligand>
</feature>
<feature type="binding site" evidence="3 11">
    <location>
        <position position="96"/>
    </location>
    <ligand>
        <name>ATP</name>
        <dbReference type="ChEBI" id="CHEBI:30616"/>
        <label>1</label>
    </ligand>
</feature>
<feature type="binding site" evidence="3 11">
    <location>
        <position position="147"/>
    </location>
    <ligand>
        <name>ATP</name>
        <dbReference type="ChEBI" id="CHEBI:30616"/>
        <label>2</label>
    </ligand>
</feature>
<feature type="binding site" evidence="3 11">
    <location>
        <position position="158"/>
    </location>
    <ligand>
        <name>ATP</name>
        <dbReference type="ChEBI" id="CHEBI:30616"/>
        <label>2</label>
    </ligand>
</feature>
<feature type="binding site" evidence="3 11">
    <location>
        <position position="159"/>
    </location>
    <ligand>
        <name>ATP</name>
        <dbReference type="ChEBI" id="CHEBI:30616"/>
        <label>2</label>
    </ligand>
</feature>
<feature type="binding site" evidence="3 11">
    <location>
        <position position="213"/>
    </location>
    <ligand>
        <name>ATP</name>
        <dbReference type="ChEBI" id="CHEBI:30616"/>
        <label>1</label>
    </ligand>
</feature>
<feature type="binding site" evidence="3 8 9 10 11">
    <location>
        <position position="286"/>
    </location>
    <ligand>
        <name>[4Fe-4S] cluster</name>
        <dbReference type="ChEBI" id="CHEBI:49883"/>
    </ligand>
</feature>
<feature type="binding site" evidence="3 8 9 10 11">
    <location>
        <position position="292"/>
    </location>
    <ligand>
        <name>[4Fe-4S] cluster</name>
        <dbReference type="ChEBI" id="CHEBI:49883"/>
    </ligand>
</feature>
<feature type="binding site" evidence="3 8 9 10 11">
    <location>
        <position position="299"/>
    </location>
    <ligand>
        <name>[4Fe-4S] cluster</name>
        <dbReference type="ChEBI" id="CHEBI:49883"/>
    </ligand>
</feature>
<feature type="binding site" evidence="3 8 9 10 11">
    <location>
        <position position="317"/>
    </location>
    <ligand>
        <name>[4Fe-4S] cluster</name>
        <dbReference type="ChEBI" id="CHEBI:49883"/>
    </ligand>
</feature>
<feature type="binding site" evidence="3 11">
    <location>
        <position position="396"/>
    </location>
    <ligand>
        <name>ATP</name>
        <dbReference type="ChEBI" id="CHEBI:30616"/>
        <label>2</label>
    </ligand>
</feature>
<feature type="binding site" evidence="3 11">
    <location>
        <position position="397"/>
    </location>
    <ligand>
        <name>ATP</name>
        <dbReference type="ChEBI" id="CHEBI:30616"/>
        <label>2</label>
    </ligand>
</feature>
<feature type="binding site" evidence="3 11">
    <location>
        <position position="398"/>
    </location>
    <ligand>
        <name>ATP</name>
        <dbReference type="ChEBI" id="CHEBI:30616"/>
        <label>2</label>
    </ligand>
</feature>
<feature type="binding site" evidence="3 11">
    <location>
        <position position="399"/>
    </location>
    <ligand>
        <name>ATP</name>
        <dbReference type="ChEBI" id="CHEBI:30616"/>
        <label>2</label>
    </ligand>
</feature>
<feature type="binding site" evidence="3 11">
    <location>
        <position position="400"/>
    </location>
    <ligand>
        <name>ATP</name>
        <dbReference type="ChEBI" id="CHEBI:30616"/>
        <label>2</label>
    </ligand>
</feature>
<feature type="binding site" evidence="3 11">
    <location>
        <position position="401"/>
    </location>
    <ligand>
        <name>ATP</name>
        <dbReference type="ChEBI" id="CHEBI:30616"/>
        <label>2</label>
    </ligand>
</feature>
<feature type="binding site" evidence="3 11">
    <location>
        <position position="402"/>
    </location>
    <ligand>
        <name>ATP</name>
        <dbReference type="ChEBI" id="CHEBI:30616"/>
        <label>2</label>
    </ligand>
</feature>
<feature type="binding site" evidence="3 11">
    <location>
        <position position="445"/>
    </location>
    <ligand>
        <name>ATP</name>
        <dbReference type="ChEBI" id="CHEBI:30616"/>
        <label>2</label>
    </ligand>
</feature>
<feature type="binding site" evidence="3 11">
    <location>
        <position position="495"/>
    </location>
    <ligand>
        <name>ATP</name>
        <dbReference type="ChEBI" id="CHEBI:30616"/>
        <label>1</label>
    </ligand>
</feature>
<feature type="binding site" evidence="3 11">
    <location>
        <position position="499"/>
    </location>
    <ligand>
        <name>ATP</name>
        <dbReference type="ChEBI" id="CHEBI:30616"/>
        <label>1</label>
    </ligand>
</feature>
<feature type="binding site" evidence="3 11">
    <location>
        <position position="503"/>
    </location>
    <ligand>
        <name>ATP</name>
        <dbReference type="ChEBI" id="CHEBI:30616"/>
        <label>1</label>
    </ligand>
</feature>
<feature type="binding site" evidence="3 11">
    <location>
        <position position="558"/>
    </location>
    <ligand>
        <name>ATP</name>
        <dbReference type="ChEBI" id="CHEBI:30616"/>
        <label>2</label>
    </ligand>
</feature>
<feature type="mutagenesis site" description="Shows a significant reduction in the proportion of OppD in the Opp complex. Strong decrease in ATPase activity." evidence="3">
    <original>C</original>
    <variation>S</variation>
    <location>
        <position position="286"/>
    </location>
</feature>
<feature type="mutagenesis site" description="Shows a significant reduction in the proportion of OppD in the Opp complex. Strong decrease in ATPase activity." evidence="3">
    <original>C</original>
    <variation>S</variation>
    <location>
        <position position="292"/>
    </location>
</feature>
<feature type="mutagenesis site" description="Shows a significant reduction in the proportion of OppD in the Opp complex. Strong decrease in ATPase activity." evidence="3">
    <original>C</original>
    <variation>S</variation>
    <location>
        <position position="299"/>
    </location>
</feature>
<feature type="mutagenesis site" description="Does not affect Opp complex assembly. Small decrease in ATPase activity." evidence="3">
    <original>C</original>
    <variation>S</variation>
    <location>
        <position position="317"/>
    </location>
</feature>
<feature type="strand" evidence="15">
    <location>
        <begin position="4"/>
        <end position="14"/>
    </location>
</feature>
<feature type="strand" evidence="15">
    <location>
        <begin position="17"/>
        <end position="19"/>
    </location>
</feature>
<feature type="strand" evidence="15">
    <location>
        <begin position="21"/>
        <end position="31"/>
    </location>
</feature>
<feature type="strand" evidence="15">
    <location>
        <begin position="36"/>
        <end position="41"/>
    </location>
</feature>
<feature type="helix" evidence="15">
    <location>
        <begin position="47"/>
        <end position="55"/>
    </location>
</feature>
<feature type="strand" evidence="14">
    <location>
        <begin position="62"/>
        <end position="64"/>
    </location>
</feature>
<feature type="strand" evidence="15">
    <location>
        <begin position="66"/>
        <end position="72"/>
    </location>
</feature>
<feature type="helix" evidence="15">
    <location>
        <begin position="82"/>
        <end position="84"/>
    </location>
</feature>
<feature type="turn" evidence="15">
    <location>
        <begin position="87"/>
        <end position="90"/>
    </location>
</feature>
<feature type="strand" evidence="15">
    <location>
        <begin position="92"/>
        <end position="94"/>
    </location>
</feature>
<feature type="turn" evidence="15">
    <location>
        <begin position="98"/>
        <end position="101"/>
    </location>
</feature>
<feature type="helix" evidence="15">
    <location>
        <begin position="108"/>
        <end position="118"/>
    </location>
</feature>
<feature type="helix" evidence="13">
    <location>
        <begin position="121"/>
        <end position="123"/>
    </location>
</feature>
<feature type="helix" evidence="15">
    <location>
        <begin position="126"/>
        <end position="139"/>
    </location>
</feature>
<feature type="helix" evidence="15">
    <location>
        <begin position="144"/>
        <end position="147"/>
    </location>
</feature>
<feature type="helix" evidence="15">
    <location>
        <begin position="152"/>
        <end position="154"/>
    </location>
</feature>
<feature type="helix" evidence="15">
    <location>
        <begin position="159"/>
        <end position="168"/>
    </location>
</feature>
<feature type="turn" evidence="15">
    <location>
        <begin position="169"/>
        <end position="171"/>
    </location>
</feature>
<feature type="strand" evidence="15">
    <location>
        <begin position="174"/>
        <end position="180"/>
    </location>
</feature>
<feature type="strand" evidence="15">
    <location>
        <begin position="183"/>
        <end position="185"/>
    </location>
</feature>
<feature type="helix" evidence="15">
    <location>
        <begin position="187"/>
        <end position="202"/>
    </location>
</feature>
<feature type="strand" evidence="15">
    <location>
        <begin position="207"/>
        <end position="211"/>
    </location>
</feature>
<feature type="helix" evidence="15">
    <location>
        <begin position="216"/>
        <end position="221"/>
    </location>
</feature>
<feature type="strand" evidence="15">
    <location>
        <begin position="223"/>
        <end position="229"/>
    </location>
</feature>
<feature type="strand" evidence="15">
    <location>
        <begin position="232"/>
        <end position="238"/>
    </location>
</feature>
<feature type="helix" evidence="15">
    <location>
        <begin position="239"/>
        <end position="245"/>
    </location>
</feature>
<feature type="helix" evidence="15">
    <location>
        <begin position="249"/>
        <end position="255"/>
    </location>
</feature>
<feature type="strand" evidence="15">
    <location>
        <begin position="279"/>
        <end position="281"/>
    </location>
</feature>
<feature type="helix" evidence="15">
    <location>
        <begin position="289"/>
        <end position="291"/>
    </location>
</feature>
<feature type="helix" evidence="15">
    <location>
        <begin position="298"/>
        <end position="300"/>
    </location>
</feature>
<feature type="strand" evidence="15">
    <location>
        <begin position="307"/>
        <end position="310"/>
    </location>
</feature>
<feature type="strand" evidence="15">
    <location>
        <begin position="313"/>
        <end position="315"/>
    </location>
</feature>
<feature type="turn" evidence="15">
    <location>
        <begin position="321"/>
        <end position="323"/>
    </location>
</feature>
<feature type="helix" evidence="15">
    <location>
        <begin position="328"/>
        <end position="331"/>
    </location>
</feature>
<feature type="strand" evidence="15">
    <location>
        <begin position="349"/>
        <end position="367"/>
    </location>
</feature>
<feature type="strand" evidence="15">
    <location>
        <begin position="369"/>
        <end position="384"/>
    </location>
</feature>
<feature type="strand" evidence="15">
    <location>
        <begin position="390"/>
        <end position="394"/>
    </location>
</feature>
<feature type="helix" evidence="15">
    <location>
        <begin position="400"/>
        <end position="408"/>
    </location>
</feature>
<feature type="strand" evidence="15">
    <location>
        <begin position="414"/>
        <end position="420"/>
    </location>
</feature>
<feature type="turn" evidence="15">
    <location>
        <begin position="425"/>
        <end position="427"/>
    </location>
</feature>
<feature type="helix" evidence="15">
    <location>
        <begin position="431"/>
        <end position="436"/>
    </location>
</feature>
<feature type="turn" evidence="12">
    <location>
        <begin position="437"/>
        <end position="439"/>
    </location>
</feature>
<feature type="strand" evidence="15">
    <location>
        <begin position="441"/>
        <end position="443"/>
    </location>
</feature>
<feature type="turn" evidence="15">
    <location>
        <begin position="447"/>
        <end position="450"/>
    </location>
</feature>
<feature type="helix" evidence="15">
    <location>
        <begin position="457"/>
        <end position="462"/>
    </location>
</feature>
<feature type="helix" evidence="15">
    <location>
        <begin position="464"/>
        <end position="466"/>
    </location>
</feature>
<feature type="strand" evidence="15">
    <location>
        <begin position="467"/>
        <end position="469"/>
    </location>
</feature>
<feature type="helix" evidence="15">
    <location>
        <begin position="474"/>
        <end position="485"/>
    </location>
</feature>
<feature type="helix" evidence="14">
    <location>
        <begin position="490"/>
        <end position="494"/>
    </location>
</feature>
<feature type="helix" evidence="15">
    <location>
        <begin position="497"/>
        <end position="499"/>
    </location>
</feature>
<feature type="helix" evidence="15">
    <location>
        <begin position="504"/>
        <end position="513"/>
    </location>
</feature>
<feature type="turn" evidence="14">
    <location>
        <begin position="514"/>
        <end position="516"/>
    </location>
</feature>
<feature type="strand" evidence="15">
    <location>
        <begin position="519"/>
        <end position="525"/>
    </location>
</feature>
<feature type="strand" evidence="15">
    <location>
        <begin position="528"/>
        <end position="530"/>
    </location>
</feature>
<feature type="helix" evidence="15">
    <location>
        <begin position="532"/>
        <end position="547"/>
    </location>
</feature>
<feature type="strand" evidence="15">
    <location>
        <begin position="552"/>
        <end position="556"/>
    </location>
</feature>
<feature type="helix" evidence="15">
    <location>
        <begin position="562"/>
        <end position="566"/>
    </location>
</feature>
<feature type="strand" evidence="15">
    <location>
        <begin position="568"/>
        <end position="574"/>
    </location>
</feature>
<feature type="strand" evidence="15">
    <location>
        <begin position="577"/>
        <end position="583"/>
    </location>
</feature>
<feature type="turn" evidence="15">
    <location>
        <begin position="584"/>
        <end position="588"/>
    </location>
</feature>
<feature type="helix" evidence="15">
    <location>
        <begin position="596"/>
        <end position="600"/>
    </location>
</feature>
<feature type="helix" evidence="12">
    <location>
        <begin position="608"/>
        <end position="610"/>
    </location>
</feature>
<proteinExistence type="evidence at protein level"/>
<comment type="function">
    <text evidence="2 3">Part of the ABC transporter complex OppABCD involved in the uptake of oligopeptides (PubMed:20808924, PubMed:38548954). Responsible for energy coupling to the transport system (PubMed:38548954). Glutathione (GSH) uptake by mycobacteria through the OppABCD system contributes to the depletion of the GSH pool in infected macrophages, which impairs the ability of the macrophage to detoxify methylglyoxal (MG) and contributes to enhanced production of inflammatory cytokines (PubMed:20808924).</text>
</comment>
<comment type="catalytic activity">
    <reaction evidence="3">
        <text>a [peptide](out) + ATP + H2O = a [peptide](in) + ADP + phosphate + H(+)</text>
        <dbReference type="Rhea" id="RHEA:78459"/>
        <dbReference type="Rhea" id="RHEA-COMP:19083"/>
        <dbReference type="ChEBI" id="CHEBI:15377"/>
        <dbReference type="ChEBI" id="CHEBI:15378"/>
        <dbReference type="ChEBI" id="CHEBI:30616"/>
        <dbReference type="ChEBI" id="CHEBI:33710"/>
        <dbReference type="ChEBI" id="CHEBI:43474"/>
        <dbReference type="ChEBI" id="CHEBI:456216"/>
        <dbReference type="EC" id="7.4.2.6"/>
    </reaction>
    <physiologicalReaction direction="left-to-right" evidence="3">
        <dbReference type="Rhea" id="RHEA:78460"/>
    </physiologicalReaction>
</comment>
<comment type="activity regulation">
    <text evidence="3">ATPase activity is stimulated by the oxidant H(2)O(2) and significantly decreased by several redox agents, including the reductants L-ascorbic acid and sodium dithionite (PubMed:38548954). The 4Fe-4S cluster plays a structural role and might also affect the ATPase activity and the regulation of the substrate transport (PubMed:38548954).</text>
</comment>
<comment type="biophysicochemical properties">
    <kinetics>
        <KM evidence="3">306 uM for ATP</KM>
        <text evidence="3">0.67 min(-1) for ATPase activity.</text>
    </kinetics>
</comment>
<comment type="subunit">
    <text evidence="3 6">The complex is composed of an ATP-binding protein (OppD), two transmembrane proteins (OppB and OppC) and a solute-binding protein (OppA).</text>
</comment>
<comment type="subcellular location">
    <subcellularLocation>
        <location evidence="5">Cell inner membrane</location>
        <topology evidence="5">Peripheral membrane protein</topology>
        <orientation evidence="3">Cytoplasmic side</orientation>
    </subcellularLocation>
    <text evidence="3">Attached to the internal side of the transmembrane subunits OppB and OppC.</text>
</comment>
<comment type="domain">
    <text evidence="3">Binding of ATP leads to conformational changes: the dimerization of two nucleotide-binding domains (NBDs) of OppD and the rearrangement of the transmembrane region of the OppABCD complex, which is the key step in coupling ATP hydrolysis and substrate release.</text>
</comment>
<comment type="disruption phenotype">
    <text evidence="2">The uptake of glutathione is compromised in the oppDA knockout mutant (PubMed:20808924). Macrophages infected with the oppD-knockout mutant produce lower amounts of TNF-alpha, IL-1 beta and IL-6 and undergo reduced apoptosis compared to the wild type (PubMed:20808924).</text>
</comment>
<comment type="similarity">
    <text evidence="5">Belongs to the ABC transporter superfamily.</text>
</comment>
<accession>P9WQJ5</accession>
<accession>L0T6E3</accession>
<accession>P63395</accession>
<accession>Q11040</accession>
<protein>
    <recommendedName>
        <fullName evidence="5">Oligopeptide transport ATP-binding protein OppD</fullName>
        <ecNumber evidence="3">7.4.2.6</ecNumber>
    </recommendedName>
</protein>